<organism>
    <name type="scientific">Micrurus altirostris</name>
    <name type="common">Uruguayan coral snake</name>
    <name type="synonym">Elaps altirostris</name>
    <dbReference type="NCBI Taxonomy" id="129457"/>
    <lineage>
        <taxon>Eukaryota</taxon>
        <taxon>Metazoa</taxon>
        <taxon>Chordata</taxon>
        <taxon>Craniata</taxon>
        <taxon>Vertebrata</taxon>
        <taxon>Euteleostomi</taxon>
        <taxon>Lepidosauria</taxon>
        <taxon>Squamata</taxon>
        <taxon>Bifurcata</taxon>
        <taxon>Unidentata</taxon>
        <taxon>Episquamata</taxon>
        <taxon>Toxicofera</taxon>
        <taxon>Serpentes</taxon>
        <taxon>Colubroidea</taxon>
        <taxon>Elapidae</taxon>
        <taxon>Elapinae</taxon>
        <taxon>Micrurus</taxon>
    </lineage>
</organism>
<name>3S152_MICAT</name>
<evidence type="ECO:0000250" key="1">
    <source>
        <dbReference type="UniProtKB" id="P0C1Z0"/>
    </source>
</evidence>
<evidence type="ECO:0000250" key="2">
    <source>
        <dbReference type="UniProtKB" id="P60775"/>
    </source>
</evidence>
<evidence type="ECO:0000269" key="3">
    <source>
    </source>
</evidence>
<evidence type="ECO:0000305" key="4"/>
<evidence type="ECO:0000305" key="5">
    <source>
    </source>
</evidence>
<dbReference type="EMBL" id="JF754474">
    <property type="protein sequence ID" value="AED89563.1"/>
    <property type="molecule type" value="mRNA"/>
</dbReference>
<dbReference type="SMR" id="F5CPD6"/>
<dbReference type="GO" id="GO:0005576">
    <property type="term" value="C:extracellular region"/>
    <property type="evidence" value="ECO:0007669"/>
    <property type="project" value="UniProtKB-SubCell"/>
</dbReference>
<dbReference type="GO" id="GO:0030550">
    <property type="term" value="F:acetylcholine receptor inhibitor activity"/>
    <property type="evidence" value="ECO:0007669"/>
    <property type="project" value="UniProtKB-KW"/>
</dbReference>
<dbReference type="GO" id="GO:0099106">
    <property type="term" value="F:ion channel regulator activity"/>
    <property type="evidence" value="ECO:0007669"/>
    <property type="project" value="UniProtKB-KW"/>
</dbReference>
<dbReference type="GO" id="GO:0090729">
    <property type="term" value="F:toxin activity"/>
    <property type="evidence" value="ECO:0007669"/>
    <property type="project" value="UniProtKB-KW"/>
</dbReference>
<dbReference type="CDD" id="cd00206">
    <property type="entry name" value="TFP_snake_toxin"/>
    <property type="match status" value="1"/>
</dbReference>
<dbReference type="FunFam" id="2.10.60.10:FF:000024">
    <property type="entry name" value="Cytotoxin 1"/>
    <property type="match status" value="1"/>
</dbReference>
<dbReference type="Gene3D" id="2.10.60.10">
    <property type="entry name" value="CD59"/>
    <property type="match status" value="1"/>
</dbReference>
<dbReference type="InterPro" id="IPR003571">
    <property type="entry name" value="Snake_3FTx"/>
</dbReference>
<dbReference type="InterPro" id="IPR045860">
    <property type="entry name" value="Snake_toxin-like_sf"/>
</dbReference>
<dbReference type="InterPro" id="IPR054131">
    <property type="entry name" value="Toxin_cobra-type"/>
</dbReference>
<dbReference type="Pfam" id="PF21947">
    <property type="entry name" value="Toxin_cobra-type"/>
    <property type="match status" value="1"/>
</dbReference>
<dbReference type="SUPFAM" id="SSF57302">
    <property type="entry name" value="Snake toxin-like"/>
    <property type="match status" value="1"/>
</dbReference>
<reference key="1">
    <citation type="journal article" date="2011" name="J. Proteomics">
        <title>Snake venomics and venom gland transcriptomic analysis of Brazilian coral snakes, Micrurus altirostris and M. corallinus.</title>
        <authorList>
            <person name="Correa-Netto C."/>
            <person name="Junqueira-de-Azevedo Ide L."/>
            <person name="Silva D.A."/>
            <person name="Ho P.L."/>
            <person name="Leitao-de-Araujo M."/>
            <person name="Alves M.L."/>
            <person name="Sanz L."/>
            <person name="Foguel D."/>
            <person name="Zingali R.B."/>
            <person name="Calvete J.J."/>
        </authorList>
    </citation>
    <scope>NUCLEOTIDE SEQUENCE [MRNA]</scope>
    <scope>PROTEIN SEQUENCE OF 22-36</scope>
    <scope>IDENTIFICATION BY MASS SPECTROMETRY</scope>
    <scope>SUBCELLULAR LOCATION</scope>
    <source>
        <tissue>Venom</tissue>
        <tissue>Venom gland</tissue>
    </source>
</reference>
<proteinExistence type="evidence at protein level"/>
<comment type="function">
    <text evidence="2">Binds to muscle nicotinic acetylcholine receptor (nAChR) and inhibit acetylcholine from binding to the receptor, thereby impairing neuromuscular transmission.</text>
</comment>
<comment type="subcellular location">
    <subcellularLocation>
        <location evidence="3">Secreted</location>
    </subcellularLocation>
</comment>
<comment type="tissue specificity">
    <text evidence="4">Expressed by the venom gland.</text>
</comment>
<comment type="similarity">
    <text evidence="4">Belongs to the three-finger toxin family. Short-chain subfamily. Type I alpha-neurotoxin sub-subfamily.</text>
</comment>
<sequence>MKTLLLTLVVVTIVCLDFGHTLICYNDHGYIGKTTETCENGMTTCYEERWREARGTRIERGCGCYKVKPGVQMNCCKTDRCNG</sequence>
<accession>F5CPD6</accession>
<feature type="signal peptide" evidence="3">
    <location>
        <begin position="1"/>
        <end position="21"/>
    </location>
</feature>
<feature type="chain" id="PRO_0000422897" description="Three-finger toxin MALT0052C" evidence="5">
    <location>
        <begin position="22"/>
        <end position="83"/>
    </location>
</feature>
<feature type="disulfide bond" evidence="1">
    <location>
        <begin position="24"/>
        <end position="45"/>
    </location>
</feature>
<feature type="disulfide bond" evidence="1">
    <location>
        <begin position="38"/>
        <end position="62"/>
    </location>
</feature>
<feature type="disulfide bond" evidence="1">
    <location>
        <begin position="64"/>
        <end position="75"/>
    </location>
</feature>
<feature type="disulfide bond" evidence="1">
    <location>
        <begin position="76"/>
        <end position="81"/>
    </location>
</feature>
<keyword id="KW-0008">Acetylcholine receptor inhibiting toxin</keyword>
<keyword id="KW-0903">Direct protein sequencing</keyword>
<keyword id="KW-1015">Disulfide bond</keyword>
<keyword id="KW-0872">Ion channel impairing toxin</keyword>
<keyword id="KW-0528">Neurotoxin</keyword>
<keyword id="KW-0629">Postsynaptic neurotoxin</keyword>
<keyword id="KW-0964">Secreted</keyword>
<keyword id="KW-0732">Signal</keyword>
<keyword id="KW-0800">Toxin</keyword>
<protein>
    <recommendedName>
        <fullName>Three-finger toxin MALT0052C</fullName>
    </recommendedName>
    <alternativeName>
        <fullName>MALT0052C</fullName>
    </alternativeName>
</protein>